<feature type="chain" id="PRO_0000286748" description="Putative 2-aminoethylphosphonate transport system permease protein PhnV">
    <location>
        <begin position="1"/>
        <end position="265"/>
    </location>
</feature>
<feature type="transmembrane region" description="Helical" evidence="2">
    <location>
        <begin position="13"/>
        <end position="33"/>
    </location>
</feature>
<feature type="transmembrane region" description="Helical" evidence="2">
    <location>
        <begin position="69"/>
        <end position="89"/>
    </location>
</feature>
<feature type="transmembrane region" description="Helical" evidence="2">
    <location>
        <begin position="104"/>
        <end position="124"/>
    </location>
</feature>
<feature type="transmembrane region" description="Helical" evidence="2">
    <location>
        <begin position="131"/>
        <end position="151"/>
    </location>
</feature>
<feature type="transmembrane region" description="Helical" evidence="2">
    <location>
        <begin position="185"/>
        <end position="205"/>
    </location>
</feature>
<feature type="transmembrane region" description="Helical" evidence="2">
    <location>
        <begin position="233"/>
        <end position="253"/>
    </location>
</feature>
<feature type="domain" description="ABC transmembrane type-1" evidence="2">
    <location>
        <begin position="65"/>
        <end position="253"/>
    </location>
</feature>
<accession>Q5PFQ5</accession>
<gene>
    <name type="primary">phnV</name>
    <name type="ordered locus">SPA2297</name>
</gene>
<keyword id="KW-0997">Cell inner membrane</keyword>
<keyword id="KW-1003">Cell membrane</keyword>
<keyword id="KW-0472">Membrane</keyword>
<keyword id="KW-0812">Transmembrane</keyword>
<keyword id="KW-1133">Transmembrane helix</keyword>
<keyword id="KW-0813">Transport</keyword>
<organism>
    <name type="scientific">Salmonella paratyphi A (strain ATCC 9150 / SARB42)</name>
    <dbReference type="NCBI Taxonomy" id="295319"/>
    <lineage>
        <taxon>Bacteria</taxon>
        <taxon>Pseudomonadati</taxon>
        <taxon>Pseudomonadota</taxon>
        <taxon>Gammaproteobacteria</taxon>
        <taxon>Enterobacterales</taxon>
        <taxon>Enterobacteriaceae</taxon>
        <taxon>Salmonella</taxon>
    </lineage>
</organism>
<protein>
    <recommendedName>
        <fullName>Putative 2-aminoethylphosphonate transport system permease protein PhnV</fullName>
    </recommendedName>
</protein>
<reference key="1">
    <citation type="journal article" date="2004" name="Nat. Genet.">
        <title>Comparison of genome degradation in Paratyphi A and Typhi, human-restricted serovars of Salmonella enterica that cause typhoid.</title>
        <authorList>
            <person name="McClelland M."/>
            <person name="Sanderson K.E."/>
            <person name="Clifton S.W."/>
            <person name="Latreille P."/>
            <person name="Porwollik S."/>
            <person name="Sabo A."/>
            <person name="Meyer R."/>
            <person name="Bieri T."/>
            <person name="Ozersky P."/>
            <person name="McLellan M."/>
            <person name="Harkins C.R."/>
            <person name="Wang C."/>
            <person name="Nguyen C."/>
            <person name="Berghoff A."/>
            <person name="Elliott G."/>
            <person name="Kohlberg S."/>
            <person name="Strong C."/>
            <person name="Du F."/>
            <person name="Carter J."/>
            <person name="Kremizki C."/>
            <person name="Layman D."/>
            <person name="Leonard S."/>
            <person name="Sun H."/>
            <person name="Fulton L."/>
            <person name="Nash W."/>
            <person name="Miner T."/>
            <person name="Minx P."/>
            <person name="Delehaunty K."/>
            <person name="Fronick C."/>
            <person name="Magrini V."/>
            <person name="Nhan M."/>
            <person name="Warren W."/>
            <person name="Florea L."/>
            <person name="Spieth J."/>
            <person name="Wilson R.K."/>
        </authorList>
    </citation>
    <scope>NUCLEOTIDE SEQUENCE [LARGE SCALE GENOMIC DNA]</scope>
    <source>
        <strain>ATCC 9150 / SARB42</strain>
    </source>
</reference>
<comment type="function">
    <text evidence="1">Probably part of the PhnSTUV complex (TC 3.A.1.11.5) involved in 2-aminoethylphosphonate import. Probably responsible for the translocation of the substrate across the membrane (By similarity).</text>
</comment>
<comment type="subcellular location">
    <subcellularLocation>
        <location evidence="3">Cell inner membrane</location>
        <topology evidence="2">Multi-pass membrane protein</topology>
    </subcellularLocation>
</comment>
<comment type="similarity">
    <text evidence="3">Belongs to the binding-protein-dependent transport system permease family.</text>
</comment>
<name>PHNV_SALPA</name>
<dbReference type="EMBL" id="CP000026">
    <property type="protein sequence ID" value="AAV78182.1"/>
    <property type="molecule type" value="Genomic_DNA"/>
</dbReference>
<dbReference type="RefSeq" id="WP_000909795.1">
    <property type="nucleotide sequence ID" value="NC_006511.1"/>
</dbReference>
<dbReference type="SMR" id="Q5PFQ5"/>
<dbReference type="KEGG" id="spt:SPA2297"/>
<dbReference type="HOGENOM" id="CLU_016047_3_2_6"/>
<dbReference type="Proteomes" id="UP000008185">
    <property type="component" value="Chromosome"/>
</dbReference>
<dbReference type="GO" id="GO:0005886">
    <property type="term" value="C:plasma membrane"/>
    <property type="evidence" value="ECO:0007669"/>
    <property type="project" value="UniProtKB-SubCell"/>
</dbReference>
<dbReference type="GO" id="GO:0055085">
    <property type="term" value="P:transmembrane transport"/>
    <property type="evidence" value="ECO:0007669"/>
    <property type="project" value="InterPro"/>
</dbReference>
<dbReference type="CDD" id="cd06261">
    <property type="entry name" value="TM_PBP2"/>
    <property type="match status" value="1"/>
</dbReference>
<dbReference type="FunFam" id="1.10.3720.10:FF:000081">
    <property type="entry name" value="2-aminoethylphosphonate ABC transport system, membrane component PhnV"/>
    <property type="match status" value="1"/>
</dbReference>
<dbReference type="Gene3D" id="1.10.3720.10">
    <property type="entry name" value="MetI-like"/>
    <property type="match status" value="1"/>
</dbReference>
<dbReference type="InterPro" id="IPR017661">
    <property type="entry name" value="AminoethylPonate_ABC_PhnV"/>
</dbReference>
<dbReference type="InterPro" id="IPR000515">
    <property type="entry name" value="MetI-like"/>
</dbReference>
<dbReference type="InterPro" id="IPR035906">
    <property type="entry name" value="MetI-like_sf"/>
</dbReference>
<dbReference type="NCBIfam" id="TIGR03255">
    <property type="entry name" value="PhnV"/>
    <property type="match status" value="1"/>
</dbReference>
<dbReference type="PANTHER" id="PTHR43357">
    <property type="entry name" value="INNER MEMBRANE ABC TRANSPORTER PERMEASE PROTEIN YDCV"/>
    <property type="match status" value="1"/>
</dbReference>
<dbReference type="PANTHER" id="PTHR43357:SF4">
    <property type="entry name" value="INNER MEMBRANE ABC TRANSPORTER PERMEASE PROTEIN YDCV"/>
    <property type="match status" value="1"/>
</dbReference>
<dbReference type="Pfam" id="PF00528">
    <property type="entry name" value="BPD_transp_1"/>
    <property type="match status" value="1"/>
</dbReference>
<dbReference type="SUPFAM" id="SSF161098">
    <property type="entry name" value="MetI-like"/>
    <property type="match status" value="1"/>
</dbReference>
<dbReference type="PROSITE" id="PS50928">
    <property type="entry name" value="ABC_TM1"/>
    <property type="match status" value="1"/>
</dbReference>
<sequence length="265" mass="28406">MLIWSPKGRAAAGVVASVLFIVFFFLPLAVILMSSLSQQWNGILPSGFTLNHFVNALHGAAWDALLASLTIGFCASLFALLCGVWAALALRQYGVKTQKWLSMVFYLPSAIPSVSVGLGILVAFSQGPLQMNGTLWIVLTAHFVLISAFTFSNVSTGLARISADIENVASSLGASPWYRLRHVTLPLLMPWMVSALALSLSLSMGELGATVMIYPPGWTTLPVAIFSLTDRGNIADGAALTIVLVAITLLLMMKLERIAKRLGQK</sequence>
<evidence type="ECO:0000250" key="1"/>
<evidence type="ECO:0000255" key="2">
    <source>
        <dbReference type="PROSITE-ProRule" id="PRU00441"/>
    </source>
</evidence>
<evidence type="ECO:0000305" key="3"/>
<proteinExistence type="inferred from homology"/>